<organism>
    <name type="scientific">Escherichia coli O81 (strain ED1a)</name>
    <dbReference type="NCBI Taxonomy" id="585397"/>
    <lineage>
        <taxon>Bacteria</taxon>
        <taxon>Pseudomonadati</taxon>
        <taxon>Pseudomonadota</taxon>
        <taxon>Gammaproteobacteria</taxon>
        <taxon>Enterobacterales</taxon>
        <taxon>Enterobacteriaceae</taxon>
        <taxon>Escherichia</taxon>
    </lineage>
</organism>
<keyword id="KW-0456">Lyase</keyword>
<keyword id="KW-0474">Menaquinone biosynthesis</keyword>
<gene>
    <name evidence="1" type="primary">menH</name>
    <name type="ordered locus">ECED1_2731</name>
</gene>
<proteinExistence type="inferred from homology"/>
<sequence>MILHAQAKHGKPGLPWLVFLHGFSGDCHEWQEVGEAFADYSRLYVDLPGHGGSATISVDGFDDVTGLLCKTLVSYNILNFWLVGYSLGGRVAMMAACQELAGLCGVVVEGGHPGLQNAEQRAERQRSDRQWAQRFRTEPLTAVFADWYQQPVFASLNDDQRRELVALRSNNNGATLAAMLEATSLAVQPDLRANLSARTFAFYYLCGERDSKFRALAAELAADCHVIPRAGHNAHRENPAGVIASLAQILRF</sequence>
<comment type="function">
    <text evidence="1">Catalyzes a proton abstraction reaction that results in 2,5-elimination of pyruvate from 2-succinyl-5-enolpyruvyl-6-hydroxy-3-cyclohexene-1-carboxylate (SEPHCHC) and the formation of 2-succinyl-6-hydroxy-2,4-cyclohexadiene-1-carboxylate (SHCHC).</text>
</comment>
<comment type="catalytic activity">
    <reaction evidence="1">
        <text>5-enolpyruvoyl-6-hydroxy-2-succinyl-cyclohex-3-ene-1-carboxylate = (1R,6R)-6-hydroxy-2-succinyl-cyclohexa-2,4-diene-1-carboxylate + pyruvate</text>
        <dbReference type="Rhea" id="RHEA:25597"/>
        <dbReference type="ChEBI" id="CHEBI:15361"/>
        <dbReference type="ChEBI" id="CHEBI:58689"/>
        <dbReference type="ChEBI" id="CHEBI:58818"/>
        <dbReference type="EC" id="4.2.99.20"/>
    </reaction>
</comment>
<comment type="pathway">
    <text evidence="1">Quinol/quinone metabolism; 1,4-dihydroxy-2-naphthoate biosynthesis; 1,4-dihydroxy-2-naphthoate from chorismate: step 3/7.</text>
</comment>
<comment type="pathway">
    <text evidence="1">Quinol/quinone metabolism; menaquinone biosynthesis.</text>
</comment>
<comment type="subunit">
    <text evidence="1">Monomer.</text>
</comment>
<comment type="similarity">
    <text evidence="1">Belongs to the AB hydrolase superfamily. MenH family.</text>
</comment>
<reference key="1">
    <citation type="journal article" date="2009" name="PLoS Genet.">
        <title>Organised genome dynamics in the Escherichia coli species results in highly diverse adaptive paths.</title>
        <authorList>
            <person name="Touchon M."/>
            <person name="Hoede C."/>
            <person name="Tenaillon O."/>
            <person name="Barbe V."/>
            <person name="Baeriswyl S."/>
            <person name="Bidet P."/>
            <person name="Bingen E."/>
            <person name="Bonacorsi S."/>
            <person name="Bouchier C."/>
            <person name="Bouvet O."/>
            <person name="Calteau A."/>
            <person name="Chiapello H."/>
            <person name="Clermont O."/>
            <person name="Cruveiller S."/>
            <person name="Danchin A."/>
            <person name="Diard M."/>
            <person name="Dossat C."/>
            <person name="Karoui M.E."/>
            <person name="Frapy E."/>
            <person name="Garry L."/>
            <person name="Ghigo J.M."/>
            <person name="Gilles A.M."/>
            <person name="Johnson J."/>
            <person name="Le Bouguenec C."/>
            <person name="Lescat M."/>
            <person name="Mangenot S."/>
            <person name="Martinez-Jehanne V."/>
            <person name="Matic I."/>
            <person name="Nassif X."/>
            <person name="Oztas S."/>
            <person name="Petit M.A."/>
            <person name="Pichon C."/>
            <person name="Rouy Z."/>
            <person name="Ruf C.S."/>
            <person name="Schneider D."/>
            <person name="Tourret J."/>
            <person name="Vacherie B."/>
            <person name="Vallenet D."/>
            <person name="Medigue C."/>
            <person name="Rocha E.P.C."/>
            <person name="Denamur E."/>
        </authorList>
    </citation>
    <scope>NUCLEOTIDE SEQUENCE [LARGE SCALE GENOMIC DNA]</scope>
    <source>
        <strain>ED1a</strain>
    </source>
</reference>
<dbReference type="EC" id="4.2.99.20" evidence="1"/>
<dbReference type="EMBL" id="CU928162">
    <property type="protein sequence ID" value="CAR08912.2"/>
    <property type="molecule type" value="Genomic_DNA"/>
</dbReference>
<dbReference type="RefSeq" id="WP_000600525.1">
    <property type="nucleotide sequence ID" value="NC_011745.1"/>
</dbReference>
<dbReference type="SMR" id="B7MXU6"/>
<dbReference type="ESTHER" id="ecoli-YFBB">
    <property type="family name" value="MenH_SHCHC"/>
</dbReference>
<dbReference type="MEROPS" id="S33.996"/>
<dbReference type="KEGG" id="ecq:ECED1_2731"/>
<dbReference type="HOGENOM" id="CLU_020336_38_2_6"/>
<dbReference type="UniPathway" id="UPA00079"/>
<dbReference type="UniPathway" id="UPA01057">
    <property type="reaction ID" value="UER00900"/>
</dbReference>
<dbReference type="Proteomes" id="UP000000748">
    <property type="component" value="Chromosome"/>
</dbReference>
<dbReference type="GO" id="GO:0070205">
    <property type="term" value="F:2-succinyl-6-hydroxy-2,4-cyclohexadiene-1-carboxylate synthase activity"/>
    <property type="evidence" value="ECO:0007669"/>
    <property type="project" value="UniProtKB-UniRule"/>
</dbReference>
<dbReference type="GO" id="GO:0009234">
    <property type="term" value="P:menaquinone biosynthetic process"/>
    <property type="evidence" value="ECO:0007669"/>
    <property type="project" value="UniProtKB-UniRule"/>
</dbReference>
<dbReference type="FunFam" id="3.40.50.1820:FF:000038">
    <property type="entry name" value="2-succinyl-6-hydroxy-2,4-cyclohexadiene-1-carboxylate synthase"/>
    <property type="match status" value="1"/>
</dbReference>
<dbReference type="Gene3D" id="3.40.50.1820">
    <property type="entry name" value="alpha/beta hydrolase"/>
    <property type="match status" value="1"/>
</dbReference>
<dbReference type="HAMAP" id="MF_01660">
    <property type="entry name" value="MenH"/>
    <property type="match status" value="1"/>
</dbReference>
<dbReference type="InterPro" id="IPR000073">
    <property type="entry name" value="AB_hydrolase_1"/>
</dbReference>
<dbReference type="InterPro" id="IPR029058">
    <property type="entry name" value="AB_hydrolase_fold"/>
</dbReference>
<dbReference type="InterPro" id="IPR022485">
    <property type="entry name" value="SHCHC_synthase_MenH"/>
</dbReference>
<dbReference type="NCBIfam" id="TIGR03695">
    <property type="entry name" value="menH_SHCHC"/>
    <property type="match status" value="1"/>
</dbReference>
<dbReference type="NCBIfam" id="NF008340">
    <property type="entry name" value="PRK11126.1"/>
    <property type="match status" value="1"/>
</dbReference>
<dbReference type="PANTHER" id="PTHR42916">
    <property type="entry name" value="2-SUCCINYL-5-ENOLPYRUVYL-6-HYDROXY-3-CYCLOHEXENE-1-CARBOXYLATE SYNTHASE"/>
    <property type="match status" value="1"/>
</dbReference>
<dbReference type="PANTHER" id="PTHR42916:SF1">
    <property type="entry name" value="PROTEIN PHYLLO, CHLOROPLASTIC"/>
    <property type="match status" value="1"/>
</dbReference>
<dbReference type="Pfam" id="PF12697">
    <property type="entry name" value="Abhydrolase_6"/>
    <property type="match status" value="1"/>
</dbReference>
<dbReference type="SUPFAM" id="SSF53474">
    <property type="entry name" value="alpha/beta-Hydrolases"/>
    <property type="match status" value="1"/>
</dbReference>
<name>MENH_ECO81</name>
<feature type="chain" id="PRO_1000187108" description="2-succinyl-6-hydroxy-2,4-cyclohexadiene-1-carboxylate synthase">
    <location>
        <begin position="1"/>
        <end position="252"/>
    </location>
</feature>
<evidence type="ECO:0000255" key="1">
    <source>
        <dbReference type="HAMAP-Rule" id="MF_01660"/>
    </source>
</evidence>
<accession>B7MXU6</accession>
<protein>
    <recommendedName>
        <fullName evidence="1">2-succinyl-6-hydroxy-2,4-cyclohexadiene-1-carboxylate synthase</fullName>
        <shortName evidence="1">SHCHC synthase</shortName>
        <ecNumber evidence="1">4.2.99.20</ecNumber>
    </recommendedName>
</protein>